<accession>A6Q3D1</accession>
<gene>
    <name evidence="1" type="primary">rpmH</name>
    <name type="ordered locus">NIS_0878</name>
</gene>
<proteinExistence type="inferred from homology"/>
<organism>
    <name type="scientific">Nitratiruptor sp. (strain SB155-2)</name>
    <dbReference type="NCBI Taxonomy" id="387092"/>
    <lineage>
        <taxon>Bacteria</taxon>
        <taxon>Pseudomonadati</taxon>
        <taxon>Campylobacterota</taxon>
        <taxon>Epsilonproteobacteria</taxon>
        <taxon>Nautiliales</taxon>
        <taxon>Nitratiruptoraceae</taxon>
        <taxon>Nitratiruptor</taxon>
    </lineage>
</organism>
<sequence>MKRTYQPHNTRRKRTHGFRARMKTKNGRKVINARRRKGRKRLAV</sequence>
<evidence type="ECO:0000255" key="1">
    <source>
        <dbReference type="HAMAP-Rule" id="MF_00391"/>
    </source>
</evidence>
<evidence type="ECO:0000256" key="2">
    <source>
        <dbReference type="SAM" id="MobiDB-lite"/>
    </source>
</evidence>
<evidence type="ECO:0000305" key="3"/>
<feature type="chain" id="PRO_1000013389" description="Large ribosomal subunit protein bL34">
    <location>
        <begin position="1"/>
        <end position="44"/>
    </location>
</feature>
<feature type="region of interest" description="Disordered" evidence="2">
    <location>
        <begin position="25"/>
        <end position="44"/>
    </location>
</feature>
<name>RL34_NITSB</name>
<reference key="1">
    <citation type="journal article" date="2007" name="Proc. Natl. Acad. Sci. U.S.A.">
        <title>Deep-sea vent epsilon-proteobacterial genomes provide insights into emergence of pathogens.</title>
        <authorList>
            <person name="Nakagawa S."/>
            <person name="Takaki Y."/>
            <person name="Shimamura S."/>
            <person name="Reysenbach A.-L."/>
            <person name="Takai K."/>
            <person name="Horikoshi K."/>
        </authorList>
    </citation>
    <scope>NUCLEOTIDE SEQUENCE [LARGE SCALE GENOMIC DNA]</scope>
    <source>
        <strain>SB155-2</strain>
    </source>
</reference>
<protein>
    <recommendedName>
        <fullName evidence="1">Large ribosomal subunit protein bL34</fullName>
    </recommendedName>
    <alternativeName>
        <fullName evidence="3">50S ribosomal protein L34</fullName>
    </alternativeName>
</protein>
<dbReference type="EMBL" id="AP009178">
    <property type="protein sequence ID" value="BAF69990.1"/>
    <property type="molecule type" value="Genomic_DNA"/>
</dbReference>
<dbReference type="RefSeq" id="WP_012082253.1">
    <property type="nucleotide sequence ID" value="NC_009662.1"/>
</dbReference>
<dbReference type="SMR" id="A6Q3D1"/>
<dbReference type="FunCoup" id="A6Q3D1">
    <property type="interactions" value="351"/>
</dbReference>
<dbReference type="STRING" id="387092.NIS_0878"/>
<dbReference type="KEGG" id="nis:NIS_0878"/>
<dbReference type="eggNOG" id="COG0230">
    <property type="taxonomic scope" value="Bacteria"/>
</dbReference>
<dbReference type="HOGENOM" id="CLU_129938_2_0_7"/>
<dbReference type="InParanoid" id="A6Q3D1"/>
<dbReference type="OrthoDB" id="9804164at2"/>
<dbReference type="Proteomes" id="UP000001118">
    <property type="component" value="Chromosome"/>
</dbReference>
<dbReference type="GO" id="GO:1990904">
    <property type="term" value="C:ribonucleoprotein complex"/>
    <property type="evidence" value="ECO:0007669"/>
    <property type="project" value="UniProtKB-KW"/>
</dbReference>
<dbReference type="GO" id="GO:0005840">
    <property type="term" value="C:ribosome"/>
    <property type="evidence" value="ECO:0007669"/>
    <property type="project" value="UniProtKB-KW"/>
</dbReference>
<dbReference type="GO" id="GO:0003735">
    <property type="term" value="F:structural constituent of ribosome"/>
    <property type="evidence" value="ECO:0007669"/>
    <property type="project" value="InterPro"/>
</dbReference>
<dbReference type="GO" id="GO:0006412">
    <property type="term" value="P:translation"/>
    <property type="evidence" value="ECO:0007669"/>
    <property type="project" value="UniProtKB-UniRule"/>
</dbReference>
<dbReference type="FunFam" id="1.10.287.3980:FF:000001">
    <property type="entry name" value="Mitochondrial ribosomal protein L34"/>
    <property type="match status" value="1"/>
</dbReference>
<dbReference type="Gene3D" id="1.10.287.3980">
    <property type="match status" value="1"/>
</dbReference>
<dbReference type="HAMAP" id="MF_00391">
    <property type="entry name" value="Ribosomal_bL34"/>
    <property type="match status" value="1"/>
</dbReference>
<dbReference type="InterPro" id="IPR000271">
    <property type="entry name" value="Ribosomal_bL34"/>
</dbReference>
<dbReference type="InterPro" id="IPR020939">
    <property type="entry name" value="Ribosomal_bL34_CS"/>
</dbReference>
<dbReference type="NCBIfam" id="TIGR01030">
    <property type="entry name" value="rpmH_bact"/>
    <property type="match status" value="1"/>
</dbReference>
<dbReference type="PANTHER" id="PTHR14503:SF4">
    <property type="entry name" value="LARGE RIBOSOMAL SUBUNIT PROTEIN BL34M"/>
    <property type="match status" value="1"/>
</dbReference>
<dbReference type="PANTHER" id="PTHR14503">
    <property type="entry name" value="MITOCHONDRIAL RIBOSOMAL PROTEIN 34 FAMILY MEMBER"/>
    <property type="match status" value="1"/>
</dbReference>
<dbReference type="Pfam" id="PF00468">
    <property type="entry name" value="Ribosomal_L34"/>
    <property type="match status" value="1"/>
</dbReference>
<dbReference type="PROSITE" id="PS00784">
    <property type="entry name" value="RIBOSOMAL_L34"/>
    <property type="match status" value="1"/>
</dbReference>
<comment type="similarity">
    <text evidence="1">Belongs to the bacterial ribosomal protein bL34 family.</text>
</comment>
<keyword id="KW-1185">Reference proteome</keyword>
<keyword id="KW-0687">Ribonucleoprotein</keyword>
<keyword id="KW-0689">Ribosomal protein</keyword>